<organism>
    <name type="scientific">Pyrobaculum calidifontis (strain DSM 21063 / JCM 11548 / VA1)</name>
    <dbReference type="NCBI Taxonomy" id="410359"/>
    <lineage>
        <taxon>Archaea</taxon>
        <taxon>Thermoproteota</taxon>
        <taxon>Thermoprotei</taxon>
        <taxon>Thermoproteales</taxon>
        <taxon>Thermoproteaceae</taxon>
        <taxon>Pyrobaculum</taxon>
    </lineage>
</organism>
<feature type="chain" id="PRO_1000059999" description="Glutamate-1-semialdehyde 2,1-aminomutase">
    <location>
        <begin position="1"/>
        <end position="441"/>
    </location>
</feature>
<feature type="modified residue" description="N6-(pyridoxal phosphate)lysine" evidence="1">
    <location>
        <position position="273"/>
    </location>
</feature>
<accession>A3MWW7</accession>
<dbReference type="EC" id="5.4.3.8" evidence="1"/>
<dbReference type="EMBL" id="CP000561">
    <property type="protein sequence ID" value="ABO09134.1"/>
    <property type="molecule type" value="Genomic_DNA"/>
</dbReference>
<dbReference type="SMR" id="A3MWW7"/>
<dbReference type="STRING" id="410359.Pcal_1717"/>
<dbReference type="KEGG" id="pcl:Pcal_1717"/>
<dbReference type="eggNOG" id="arCOG00918">
    <property type="taxonomic scope" value="Archaea"/>
</dbReference>
<dbReference type="HOGENOM" id="CLU_016922_1_5_2"/>
<dbReference type="UniPathway" id="UPA00251">
    <property type="reaction ID" value="UER00317"/>
</dbReference>
<dbReference type="Proteomes" id="UP000001431">
    <property type="component" value="Chromosome"/>
</dbReference>
<dbReference type="GO" id="GO:0005737">
    <property type="term" value="C:cytoplasm"/>
    <property type="evidence" value="ECO:0007669"/>
    <property type="project" value="UniProtKB-SubCell"/>
</dbReference>
<dbReference type="GO" id="GO:0042286">
    <property type="term" value="F:glutamate-1-semialdehyde 2,1-aminomutase activity"/>
    <property type="evidence" value="ECO:0007669"/>
    <property type="project" value="UniProtKB-UniRule"/>
</dbReference>
<dbReference type="GO" id="GO:0030170">
    <property type="term" value="F:pyridoxal phosphate binding"/>
    <property type="evidence" value="ECO:0007669"/>
    <property type="project" value="InterPro"/>
</dbReference>
<dbReference type="GO" id="GO:0008483">
    <property type="term" value="F:transaminase activity"/>
    <property type="evidence" value="ECO:0007669"/>
    <property type="project" value="InterPro"/>
</dbReference>
<dbReference type="GO" id="GO:0006782">
    <property type="term" value="P:protoporphyrinogen IX biosynthetic process"/>
    <property type="evidence" value="ECO:0007669"/>
    <property type="project" value="UniProtKB-UniRule"/>
</dbReference>
<dbReference type="CDD" id="cd00610">
    <property type="entry name" value="OAT_like"/>
    <property type="match status" value="1"/>
</dbReference>
<dbReference type="FunFam" id="3.40.640.10:FF:000021">
    <property type="entry name" value="Glutamate-1-semialdehyde 2,1-aminomutase"/>
    <property type="match status" value="1"/>
</dbReference>
<dbReference type="Gene3D" id="3.90.1150.10">
    <property type="entry name" value="Aspartate Aminotransferase, domain 1"/>
    <property type="match status" value="1"/>
</dbReference>
<dbReference type="Gene3D" id="3.40.640.10">
    <property type="entry name" value="Type I PLP-dependent aspartate aminotransferase-like (Major domain)"/>
    <property type="match status" value="1"/>
</dbReference>
<dbReference type="HAMAP" id="MF_00375">
    <property type="entry name" value="HemL_aminotrans_3"/>
    <property type="match status" value="1"/>
</dbReference>
<dbReference type="InterPro" id="IPR004639">
    <property type="entry name" value="4pyrrol_synth_GluAld_NH2Trfase"/>
</dbReference>
<dbReference type="InterPro" id="IPR005814">
    <property type="entry name" value="Aminotrans_3"/>
</dbReference>
<dbReference type="InterPro" id="IPR049704">
    <property type="entry name" value="Aminotrans_3_PPA_site"/>
</dbReference>
<dbReference type="InterPro" id="IPR015424">
    <property type="entry name" value="PyrdxlP-dep_Trfase"/>
</dbReference>
<dbReference type="InterPro" id="IPR015421">
    <property type="entry name" value="PyrdxlP-dep_Trfase_major"/>
</dbReference>
<dbReference type="InterPro" id="IPR015422">
    <property type="entry name" value="PyrdxlP-dep_Trfase_small"/>
</dbReference>
<dbReference type="NCBIfam" id="TIGR00713">
    <property type="entry name" value="hemL"/>
    <property type="match status" value="1"/>
</dbReference>
<dbReference type="NCBIfam" id="NF000818">
    <property type="entry name" value="PRK00062.1"/>
    <property type="match status" value="1"/>
</dbReference>
<dbReference type="PANTHER" id="PTHR43713">
    <property type="entry name" value="GLUTAMATE-1-SEMIALDEHYDE 2,1-AMINOMUTASE"/>
    <property type="match status" value="1"/>
</dbReference>
<dbReference type="PANTHER" id="PTHR43713:SF3">
    <property type="entry name" value="GLUTAMATE-1-SEMIALDEHYDE 2,1-AMINOMUTASE 1, CHLOROPLASTIC-RELATED"/>
    <property type="match status" value="1"/>
</dbReference>
<dbReference type="Pfam" id="PF00202">
    <property type="entry name" value="Aminotran_3"/>
    <property type="match status" value="1"/>
</dbReference>
<dbReference type="SUPFAM" id="SSF53383">
    <property type="entry name" value="PLP-dependent transferases"/>
    <property type="match status" value="1"/>
</dbReference>
<dbReference type="PROSITE" id="PS00600">
    <property type="entry name" value="AA_TRANSFER_CLASS_3"/>
    <property type="match status" value="1"/>
</dbReference>
<evidence type="ECO:0000255" key="1">
    <source>
        <dbReference type="HAMAP-Rule" id="MF_00375"/>
    </source>
</evidence>
<sequence>MPFDVQFLKVFDGVLMLFERAKAVFPGGVNSPARALKHLPTPLVAKAASGPYLYTDRGRLVDFCLAFGAIILGHAHPKVRRAVEEQLARGWIYALLTEEEVLFAEKIRAHVPSVEKMRFVNSGTEATMNAVRLARGFTGRDYIIKFDGNFHGSHDYVLVKAGSGAATWGIPTSAGIPSDVVKMTVVVPYNDVDAFVKAVREVGDRLAAVIVEPIAGNYGLILPEVEFLKALREETERVGALLIFDEVITGFRVGLGGAQGLYGVVPDLTTLGKVIGGGFPIGVFGGKSFIMDLVAPQGPVYNAGTFNAHPVSIAAGLAVLEELEGGQVYSVANDAARRMAEGIRDLAERVGFDVVVKHIASMFQFYFKKGDVKTPQDVRESNEKLYLKLHELAIGHGVYLAPSQFEVNFTSAAHTAEVVEEALGALEKVFRELRREVGGNS</sequence>
<name>GSA_PYRCJ</name>
<gene>
    <name evidence="1" type="primary">hemL</name>
    <name type="ordered locus">Pcal_1717</name>
</gene>
<keyword id="KW-0963">Cytoplasm</keyword>
<keyword id="KW-0413">Isomerase</keyword>
<keyword id="KW-0627">Porphyrin biosynthesis</keyword>
<keyword id="KW-0663">Pyridoxal phosphate</keyword>
<proteinExistence type="inferred from homology"/>
<reference key="1">
    <citation type="submission" date="2007-02" db="EMBL/GenBank/DDBJ databases">
        <title>Complete sequence of Pyrobaculum calidifontis JCM 11548.</title>
        <authorList>
            <consortium name="US DOE Joint Genome Institute"/>
            <person name="Copeland A."/>
            <person name="Lucas S."/>
            <person name="Lapidus A."/>
            <person name="Barry K."/>
            <person name="Glavina del Rio T."/>
            <person name="Dalin E."/>
            <person name="Tice H."/>
            <person name="Pitluck S."/>
            <person name="Chain P."/>
            <person name="Malfatti S."/>
            <person name="Shin M."/>
            <person name="Vergez L."/>
            <person name="Schmutz J."/>
            <person name="Larimer F."/>
            <person name="Land M."/>
            <person name="Hauser L."/>
            <person name="Kyrpides N."/>
            <person name="Mikhailova N."/>
            <person name="Cozen A.E."/>
            <person name="Fitz-Gibbon S.T."/>
            <person name="House C.H."/>
            <person name="Saltikov C."/>
            <person name="Lowe T.M."/>
            <person name="Richardson P."/>
        </authorList>
    </citation>
    <scope>NUCLEOTIDE SEQUENCE [LARGE SCALE GENOMIC DNA]</scope>
    <source>
        <strain>DSM 21063 / JCM 11548 / VA1</strain>
    </source>
</reference>
<protein>
    <recommendedName>
        <fullName evidence="1">Glutamate-1-semialdehyde 2,1-aminomutase</fullName>
        <shortName evidence="1">GSA</shortName>
        <ecNumber evidence="1">5.4.3.8</ecNumber>
    </recommendedName>
    <alternativeName>
        <fullName evidence="1">Glutamate-1-semialdehyde aminotransferase</fullName>
        <shortName evidence="1">GSA-AT</shortName>
    </alternativeName>
</protein>
<comment type="catalytic activity">
    <reaction evidence="1">
        <text>(S)-4-amino-5-oxopentanoate = 5-aminolevulinate</text>
        <dbReference type="Rhea" id="RHEA:14265"/>
        <dbReference type="ChEBI" id="CHEBI:57501"/>
        <dbReference type="ChEBI" id="CHEBI:356416"/>
        <dbReference type="EC" id="5.4.3.8"/>
    </reaction>
</comment>
<comment type="cofactor">
    <cofactor evidence="1">
        <name>pyridoxal 5'-phosphate</name>
        <dbReference type="ChEBI" id="CHEBI:597326"/>
    </cofactor>
</comment>
<comment type="pathway">
    <text evidence="1">Porphyrin-containing compound metabolism; protoporphyrin-IX biosynthesis; 5-aminolevulinate from L-glutamyl-tRNA(Glu): step 2/2.</text>
</comment>
<comment type="subcellular location">
    <subcellularLocation>
        <location evidence="1">Cytoplasm</location>
    </subcellularLocation>
</comment>
<comment type="similarity">
    <text evidence="1">Belongs to the class-III pyridoxal-phosphate-dependent aminotransferase family. HemL subfamily.</text>
</comment>